<keyword id="KW-1003">Cell membrane</keyword>
<keyword id="KW-0217">Developmental protein</keyword>
<keyword id="KW-1015">Disulfide bond</keyword>
<keyword id="KW-0297">G-protein coupled receptor</keyword>
<keyword id="KW-0393">Immunoglobulin domain</keyword>
<keyword id="KW-0433">Leucine-rich repeat</keyword>
<keyword id="KW-0472">Membrane</keyword>
<keyword id="KW-0675">Receptor</keyword>
<keyword id="KW-1185">Reference proteome</keyword>
<keyword id="KW-0677">Repeat</keyword>
<keyword id="KW-0732">Signal</keyword>
<keyword id="KW-0807">Transducer</keyword>
<keyword id="KW-0812">Transmembrane</keyword>
<keyword id="KW-1133">Transmembrane helix</keyword>
<name>AGRA3_DANRE</name>
<accession>S4X0Q8</accession>
<reference key="1">
    <citation type="journal article" date="2013" name="Development">
        <title>Gpr125 modulates Dishevelled distribution and planar cell polarity signaling.</title>
        <authorList>
            <person name="Li X."/>
            <person name="Roszko I."/>
            <person name="Sepich D.S."/>
            <person name="Ni M."/>
            <person name="Hamm H.E."/>
            <person name="Marlow F.L."/>
            <person name="Solnica-Krezel L."/>
        </authorList>
    </citation>
    <scope>NUCLEOTIDE SEQUENCE [MRNA]</scope>
    <scope>FUNCTION</scope>
    <scope>DEVELOPMENTAL STAGE</scope>
    <scope>DISRUPTION PHENOTYPE</scope>
    <scope>INTERACTION WITH DISHEVELLED</scope>
    <scope>SUBCELLULAR LOCATION</scope>
</reference>
<reference key="2">
    <citation type="journal article" date="2015" name="BMC Genomics">
        <title>Defining the gene repertoire and spatiotemporal expression profiles of adhesion G protein-coupled receptors in zebrafish.</title>
        <authorList>
            <person name="Harty B.L."/>
            <person name="Krishnan A."/>
            <person name="Sanchez N.E."/>
            <person name="Schioeth H.B."/>
            <person name="Monk K.R."/>
        </authorList>
    </citation>
    <scope>TISSUE SPECIFICITY</scope>
    <scope>DEVELOPMENTAL STAGE</scope>
</reference>
<reference key="3">
    <citation type="journal article" date="2013" name="Nature">
        <title>The zebrafish reference genome sequence and its relationship to the human genome.</title>
        <authorList>
            <person name="Howe K."/>
            <person name="Clark M.D."/>
            <person name="Torroja C.F."/>
            <person name="Torrance J."/>
            <person name="Berthelot C."/>
            <person name="Muffato M."/>
            <person name="Collins J.E."/>
            <person name="Humphray S."/>
            <person name="McLaren K."/>
            <person name="Matthews L."/>
            <person name="McLaren S."/>
            <person name="Sealy I."/>
            <person name="Caccamo M."/>
            <person name="Churcher C."/>
            <person name="Scott C."/>
            <person name="Barrett J.C."/>
            <person name="Koch R."/>
            <person name="Rauch G.J."/>
            <person name="White S."/>
            <person name="Chow W."/>
            <person name="Kilian B."/>
            <person name="Quintais L.T."/>
            <person name="Guerra-Assuncao J.A."/>
            <person name="Zhou Y."/>
            <person name="Gu Y."/>
            <person name="Yen J."/>
            <person name="Vogel J.H."/>
            <person name="Eyre T."/>
            <person name="Redmond S."/>
            <person name="Banerjee R."/>
            <person name="Chi J."/>
            <person name="Fu B."/>
            <person name="Langley E."/>
            <person name="Maguire S.F."/>
            <person name="Laird G.K."/>
            <person name="Lloyd D."/>
            <person name="Kenyon E."/>
            <person name="Donaldson S."/>
            <person name="Sehra H."/>
            <person name="Almeida-King J."/>
            <person name="Loveland J."/>
            <person name="Trevanion S."/>
            <person name="Jones M."/>
            <person name="Quail M."/>
            <person name="Willey D."/>
            <person name="Hunt A."/>
            <person name="Burton J."/>
            <person name="Sims S."/>
            <person name="McLay K."/>
            <person name="Plumb B."/>
            <person name="Davis J."/>
            <person name="Clee C."/>
            <person name="Oliver K."/>
            <person name="Clark R."/>
            <person name="Riddle C."/>
            <person name="Elliot D."/>
            <person name="Threadgold G."/>
            <person name="Harden G."/>
            <person name="Ware D."/>
            <person name="Begum S."/>
            <person name="Mortimore B."/>
            <person name="Kerry G."/>
            <person name="Heath P."/>
            <person name="Phillimore B."/>
            <person name="Tracey A."/>
            <person name="Corby N."/>
            <person name="Dunn M."/>
            <person name="Johnson C."/>
            <person name="Wood J."/>
            <person name="Clark S."/>
            <person name="Pelan S."/>
            <person name="Griffiths G."/>
            <person name="Smith M."/>
            <person name="Glithero R."/>
            <person name="Howden P."/>
            <person name="Barker N."/>
            <person name="Lloyd C."/>
            <person name="Stevens C."/>
            <person name="Harley J."/>
            <person name="Holt K."/>
            <person name="Panagiotidis G."/>
            <person name="Lovell J."/>
            <person name="Beasley H."/>
            <person name="Henderson C."/>
            <person name="Gordon D."/>
            <person name="Auger K."/>
            <person name="Wright D."/>
            <person name="Collins J."/>
            <person name="Raisen C."/>
            <person name="Dyer L."/>
            <person name="Leung K."/>
            <person name="Robertson L."/>
            <person name="Ambridge K."/>
            <person name="Leongamornlert D."/>
            <person name="McGuire S."/>
            <person name="Gilderthorp R."/>
            <person name="Griffiths C."/>
            <person name="Manthravadi D."/>
            <person name="Nichol S."/>
            <person name="Barker G."/>
            <person name="Whitehead S."/>
            <person name="Kay M."/>
            <person name="Brown J."/>
            <person name="Murnane C."/>
            <person name="Gray E."/>
            <person name="Humphries M."/>
            <person name="Sycamore N."/>
            <person name="Barker D."/>
            <person name="Saunders D."/>
            <person name="Wallis J."/>
            <person name="Babbage A."/>
            <person name="Hammond S."/>
            <person name="Mashreghi-Mohammadi M."/>
            <person name="Barr L."/>
            <person name="Martin S."/>
            <person name="Wray P."/>
            <person name="Ellington A."/>
            <person name="Matthews N."/>
            <person name="Ellwood M."/>
            <person name="Woodmansey R."/>
            <person name="Clark G."/>
            <person name="Cooper J."/>
            <person name="Tromans A."/>
            <person name="Grafham D."/>
            <person name="Skuce C."/>
            <person name="Pandian R."/>
            <person name="Andrews R."/>
            <person name="Harrison E."/>
            <person name="Kimberley A."/>
            <person name="Garnett J."/>
            <person name="Fosker N."/>
            <person name="Hall R."/>
            <person name="Garner P."/>
            <person name="Kelly D."/>
            <person name="Bird C."/>
            <person name="Palmer S."/>
            <person name="Gehring I."/>
            <person name="Berger A."/>
            <person name="Dooley C.M."/>
            <person name="Ersan-Urun Z."/>
            <person name="Eser C."/>
            <person name="Geiger H."/>
            <person name="Geisler M."/>
            <person name="Karotki L."/>
            <person name="Kirn A."/>
            <person name="Konantz J."/>
            <person name="Konantz M."/>
            <person name="Oberlander M."/>
            <person name="Rudolph-Geiger S."/>
            <person name="Teucke M."/>
            <person name="Lanz C."/>
            <person name="Raddatz G."/>
            <person name="Osoegawa K."/>
            <person name="Zhu B."/>
            <person name="Rapp A."/>
            <person name="Widaa S."/>
            <person name="Langford C."/>
            <person name="Yang F."/>
            <person name="Schuster S.C."/>
            <person name="Carter N.P."/>
            <person name="Harrow J."/>
            <person name="Ning Z."/>
            <person name="Herrero J."/>
            <person name="Searle S.M."/>
            <person name="Enright A."/>
            <person name="Geisler R."/>
            <person name="Plasterk R.H."/>
            <person name="Lee C."/>
            <person name="Westerfield M."/>
            <person name="de Jong P.J."/>
            <person name="Zon L.I."/>
            <person name="Postlethwait J.H."/>
            <person name="Nusslein-Volhard C."/>
            <person name="Hubbard T.J."/>
            <person name="Roest Crollius H."/>
            <person name="Rogers J."/>
            <person name="Stemple D.L."/>
        </authorList>
    </citation>
    <scope>NUCLEOTIDE SEQUENCE [LARGE SCALE GENOMIC DNA]</scope>
    <source>
        <strain>Tuebingen</strain>
    </source>
</reference>
<organism evidence="8">
    <name type="scientific">Danio rerio</name>
    <name type="common">Zebrafish</name>
    <name type="synonym">Brachydanio rerio</name>
    <dbReference type="NCBI Taxonomy" id="7955"/>
    <lineage>
        <taxon>Eukaryota</taxon>
        <taxon>Metazoa</taxon>
        <taxon>Chordata</taxon>
        <taxon>Craniata</taxon>
        <taxon>Vertebrata</taxon>
        <taxon>Euteleostomi</taxon>
        <taxon>Actinopterygii</taxon>
        <taxon>Neopterygii</taxon>
        <taxon>Teleostei</taxon>
        <taxon>Ostariophysi</taxon>
        <taxon>Cypriniformes</taxon>
        <taxon>Danionidae</taxon>
        <taxon>Danioninae</taxon>
        <taxon>Danio</taxon>
    </lineage>
</organism>
<gene>
    <name type="primary">adgra3</name>
    <name type="synonym">gpr125</name>
</gene>
<comment type="function">
    <text evidence="5">Orphan receptor that acts as a critical modulator of planar cell polarity during gastrulation. Controls the localization of dishevelled.</text>
</comment>
<comment type="subunit">
    <text evidence="5">Interacts (via PDZ-binding motif) with disheveled proteins; leading to the localization of dishevelled proteins to specific membrane subdomains.</text>
</comment>
<comment type="subcellular location">
    <subcellularLocation>
        <location evidence="5">Cell membrane</location>
        <topology evidence="1">Multi-pass membrane protein</topology>
    </subcellularLocation>
</comment>
<comment type="tissue specificity">
    <text evidence="6">Ubiquitously expressed at very low levels.</text>
</comment>
<comment type="developmental stage">
    <text evidence="5 6">Highly expressed during early development and then ubiquitously expressed at very low levels at later larval stages.</text>
</comment>
<comment type="disruption phenotype">
    <text evidence="5">Morpholino knockdown of the protein exacerbated the convergence/ extension (C/E) phenotypes of other planar cell polarity (PCP) family member mutants (vangl2, scribbled).</text>
</comment>
<comment type="miscellaneous">
    <text evidence="7">Most adhesion GPCRs proteins undergo autoproteolysis at the GPS region of the GAIN-B domain. ADGRA3 is predicted non-cleavable because of the lack of a consensus catalytic triad sequence within GPS region.</text>
</comment>
<comment type="similarity">
    <text evidence="7">Belongs to the G-protein coupled receptor 2 family. Adhesion G-protein coupled receptor (ADGR) subfamily.</text>
</comment>
<evidence type="ECO:0000255" key="1"/>
<evidence type="ECO:0000255" key="2">
    <source>
        <dbReference type="PROSITE-ProRule" id="PRU00098"/>
    </source>
</evidence>
<evidence type="ECO:0000255" key="3">
    <source>
        <dbReference type="PROSITE-ProRule" id="PRU00114"/>
    </source>
</evidence>
<evidence type="ECO:0000256" key="4">
    <source>
        <dbReference type="SAM" id="MobiDB-lite"/>
    </source>
</evidence>
<evidence type="ECO:0000269" key="5">
    <source>
    </source>
</evidence>
<evidence type="ECO:0000269" key="6">
    <source>
    </source>
</evidence>
<evidence type="ECO:0000305" key="7"/>
<evidence type="ECO:0000312" key="8">
    <source>
        <dbReference type="EMBL" id="AGP05313.1"/>
    </source>
</evidence>
<dbReference type="EMBL" id="KC996731">
    <property type="protein sequence ID" value="AGP05313.1"/>
    <property type="molecule type" value="mRNA"/>
</dbReference>
<dbReference type="EMBL" id="CABZ01086759">
    <property type="status" value="NOT_ANNOTATED_CDS"/>
    <property type="molecule type" value="Genomic_DNA"/>
</dbReference>
<dbReference type="EMBL" id="CABZ01086760">
    <property type="status" value="NOT_ANNOTATED_CDS"/>
    <property type="molecule type" value="Genomic_DNA"/>
</dbReference>
<dbReference type="EMBL" id="CABZ01086761">
    <property type="status" value="NOT_ANNOTATED_CDS"/>
    <property type="molecule type" value="Genomic_DNA"/>
</dbReference>
<dbReference type="EMBL" id="CABZ01086762">
    <property type="status" value="NOT_ANNOTATED_CDS"/>
    <property type="molecule type" value="Genomic_DNA"/>
</dbReference>
<dbReference type="EMBL" id="CABZ01086763">
    <property type="status" value="NOT_ANNOTATED_CDS"/>
    <property type="molecule type" value="Genomic_DNA"/>
</dbReference>
<dbReference type="EMBL" id="CABZ01086764">
    <property type="status" value="NOT_ANNOTATED_CDS"/>
    <property type="molecule type" value="Genomic_DNA"/>
</dbReference>
<dbReference type="EMBL" id="CABZ01086765">
    <property type="status" value="NOT_ANNOTATED_CDS"/>
    <property type="molecule type" value="Genomic_DNA"/>
</dbReference>
<dbReference type="EMBL" id="CABZ01086766">
    <property type="status" value="NOT_ANNOTATED_CDS"/>
    <property type="molecule type" value="Genomic_DNA"/>
</dbReference>
<dbReference type="EMBL" id="CABZ01086767">
    <property type="status" value="NOT_ANNOTATED_CDS"/>
    <property type="molecule type" value="Genomic_DNA"/>
</dbReference>
<dbReference type="RefSeq" id="NP_001289153.1">
    <property type="nucleotide sequence ID" value="NM_001302224.1"/>
</dbReference>
<dbReference type="SMR" id="S4X0Q8"/>
<dbReference type="FunCoup" id="S4X0Q8">
    <property type="interactions" value="1367"/>
</dbReference>
<dbReference type="STRING" id="7955.ENSDARP00000101958"/>
<dbReference type="PaxDb" id="7955-ENSDARP00000109414"/>
<dbReference type="GeneID" id="100003592"/>
<dbReference type="KEGG" id="dre:100003592"/>
<dbReference type="AGR" id="ZFIN:ZDB-GENE-131003-2"/>
<dbReference type="CTD" id="166647"/>
<dbReference type="ZFIN" id="ZDB-GENE-131003-2">
    <property type="gene designation" value="adgra3"/>
</dbReference>
<dbReference type="eggNOG" id="KOG0619">
    <property type="taxonomic scope" value="Eukaryota"/>
</dbReference>
<dbReference type="InParanoid" id="S4X0Q8"/>
<dbReference type="OrthoDB" id="10031018at2759"/>
<dbReference type="PRO" id="PR:S4X0Q8"/>
<dbReference type="Proteomes" id="UP000000437">
    <property type="component" value="Chromosome 7"/>
</dbReference>
<dbReference type="GO" id="GO:0009897">
    <property type="term" value="C:external side of plasma membrane"/>
    <property type="evidence" value="ECO:0000318"/>
    <property type="project" value="GO_Central"/>
</dbReference>
<dbReference type="GO" id="GO:0005886">
    <property type="term" value="C:plasma membrane"/>
    <property type="evidence" value="ECO:0000314"/>
    <property type="project" value="ZFIN"/>
</dbReference>
<dbReference type="GO" id="GO:0004930">
    <property type="term" value="F:G protein-coupled receptor activity"/>
    <property type="evidence" value="ECO:0007669"/>
    <property type="project" value="UniProtKB-KW"/>
</dbReference>
<dbReference type="GO" id="GO:0007166">
    <property type="term" value="P:cell surface receptor signaling pathway"/>
    <property type="evidence" value="ECO:0000318"/>
    <property type="project" value="GO_Central"/>
</dbReference>
<dbReference type="GO" id="GO:0060027">
    <property type="term" value="P:convergent extension involved in gastrulation"/>
    <property type="evidence" value="ECO:0000316"/>
    <property type="project" value="ZFIN"/>
</dbReference>
<dbReference type="GO" id="GO:0097475">
    <property type="term" value="P:motor neuron migration"/>
    <property type="evidence" value="ECO:0000316"/>
    <property type="project" value="ZFIN"/>
</dbReference>
<dbReference type="GO" id="GO:2000095">
    <property type="term" value="P:regulation of Wnt signaling pathway, planar cell polarity pathway"/>
    <property type="evidence" value="ECO:0000315"/>
    <property type="project" value="ZFIN"/>
</dbReference>
<dbReference type="GO" id="GO:0060071">
    <property type="term" value="P:Wnt signaling pathway, planar cell polarity pathway"/>
    <property type="evidence" value="ECO:0000314"/>
    <property type="project" value="ZFIN"/>
</dbReference>
<dbReference type="CDD" id="cd00096">
    <property type="entry name" value="Ig"/>
    <property type="match status" value="1"/>
</dbReference>
<dbReference type="FunFam" id="3.80.10.10:FF:000287">
    <property type="entry name" value="adhesion G protein-coupled receptor A3"/>
    <property type="match status" value="1"/>
</dbReference>
<dbReference type="Gene3D" id="2.60.220.50">
    <property type="match status" value="1"/>
</dbReference>
<dbReference type="Gene3D" id="4.10.1240.10">
    <property type="entry name" value="GPCR, family 2, extracellular hormone receptor domain"/>
    <property type="match status" value="1"/>
</dbReference>
<dbReference type="Gene3D" id="2.60.40.10">
    <property type="entry name" value="Immunoglobulins"/>
    <property type="match status" value="1"/>
</dbReference>
<dbReference type="Gene3D" id="1.20.1070.10">
    <property type="entry name" value="Rhodopsin 7-helix transmembrane proteins"/>
    <property type="match status" value="1"/>
</dbReference>
<dbReference type="Gene3D" id="3.80.10.10">
    <property type="entry name" value="Ribonuclease Inhibitor"/>
    <property type="match status" value="1"/>
</dbReference>
<dbReference type="InterPro" id="IPR051963">
    <property type="entry name" value="Adhesion_GPCR_A"/>
</dbReference>
<dbReference type="InterPro" id="IPR000483">
    <property type="entry name" value="Cys-rich_flank_reg_C"/>
</dbReference>
<dbReference type="InterPro" id="IPR057244">
    <property type="entry name" value="GAIN_B"/>
</dbReference>
<dbReference type="InterPro" id="IPR046338">
    <property type="entry name" value="GAIN_dom_sf"/>
</dbReference>
<dbReference type="InterPro" id="IPR017981">
    <property type="entry name" value="GPCR_2-like_7TM"/>
</dbReference>
<dbReference type="InterPro" id="IPR036445">
    <property type="entry name" value="GPCR_2_extracell_dom_sf"/>
</dbReference>
<dbReference type="InterPro" id="IPR001879">
    <property type="entry name" value="GPCR_2_extracellular_dom"/>
</dbReference>
<dbReference type="InterPro" id="IPR000832">
    <property type="entry name" value="GPCR_2_secretin-like"/>
</dbReference>
<dbReference type="InterPro" id="IPR000203">
    <property type="entry name" value="GPS"/>
</dbReference>
<dbReference type="InterPro" id="IPR007110">
    <property type="entry name" value="Ig-like_dom"/>
</dbReference>
<dbReference type="InterPro" id="IPR036179">
    <property type="entry name" value="Ig-like_dom_sf"/>
</dbReference>
<dbReference type="InterPro" id="IPR013783">
    <property type="entry name" value="Ig-like_fold"/>
</dbReference>
<dbReference type="InterPro" id="IPR013098">
    <property type="entry name" value="Ig_I-set"/>
</dbReference>
<dbReference type="InterPro" id="IPR003599">
    <property type="entry name" value="Ig_sub"/>
</dbReference>
<dbReference type="InterPro" id="IPR001611">
    <property type="entry name" value="Leu-rich_rpt"/>
</dbReference>
<dbReference type="InterPro" id="IPR003591">
    <property type="entry name" value="Leu-rich_rpt_typical-subtyp"/>
</dbReference>
<dbReference type="InterPro" id="IPR032675">
    <property type="entry name" value="LRR_dom_sf"/>
</dbReference>
<dbReference type="PANTHER" id="PTHR45930:SF2">
    <property type="entry name" value="ADHESION G PROTEIN-COUPLED RECEPTOR A3"/>
    <property type="match status" value="1"/>
</dbReference>
<dbReference type="PANTHER" id="PTHR45930">
    <property type="entry name" value="G-PROTEIN COUPLED RECEPTOR 124-LIKE PROTEIN"/>
    <property type="match status" value="1"/>
</dbReference>
<dbReference type="Pfam" id="PF00002">
    <property type="entry name" value="7tm_2"/>
    <property type="match status" value="1"/>
</dbReference>
<dbReference type="Pfam" id="PF01825">
    <property type="entry name" value="GPS"/>
    <property type="match status" value="1"/>
</dbReference>
<dbReference type="Pfam" id="PF07679">
    <property type="entry name" value="I-set"/>
    <property type="match status" value="1"/>
</dbReference>
<dbReference type="Pfam" id="PF13855">
    <property type="entry name" value="LRR_8"/>
    <property type="match status" value="1"/>
</dbReference>
<dbReference type="SMART" id="SM00303">
    <property type="entry name" value="GPS"/>
    <property type="match status" value="1"/>
</dbReference>
<dbReference type="SMART" id="SM00409">
    <property type="entry name" value="IG"/>
    <property type="match status" value="1"/>
</dbReference>
<dbReference type="SMART" id="SM00369">
    <property type="entry name" value="LRR_TYP"/>
    <property type="match status" value="4"/>
</dbReference>
<dbReference type="SMART" id="SM00082">
    <property type="entry name" value="LRRCT"/>
    <property type="match status" value="1"/>
</dbReference>
<dbReference type="SUPFAM" id="SSF111418">
    <property type="entry name" value="Hormone receptor domain"/>
    <property type="match status" value="1"/>
</dbReference>
<dbReference type="SUPFAM" id="SSF48726">
    <property type="entry name" value="Immunoglobulin"/>
    <property type="match status" value="1"/>
</dbReference>
<dbReference type="SUPFAM" id="SSF52058">
    <property type="entry name" value="L domain-like"/>
    <property type="match status" value="1"/>
</dbReference>
<dbReference type="PROSITE" id="PS50227">
    <property type="entry name" value="G_PROTEIN_RECEP_F2_3"/>
    <property type="match status" value="1"/>
</dbReference>
<dbReference type="PROSITE" id="PS50261">
    <property type="entry name" value="G_PROTEIN_RECEP_F2_4"/>
    <property type="match status" value="1"/>
</dbReference>
<dbReference type="PROSITE" id="PS50221">
    <property type="entry name" value="GAIN_B"/>
    <property type="match status" value="1"/>
</dbReference>
<dbReference type="PROSITE" id="PS50835">
    <property type="entry name" value="IG_LIKE"/>
    <property type="match status" value="1"/>
</dbReference>
<dbReference type="PROSITE" id="PS51450">
    <property type="entry name" value="LRR"/>
    <property type="match status" value="4"/>
</dbReference>
<proteinExistence type="evidence at protein level"/>
<feature type="signal peptide" evidence="1">
    <location>
        <begin position="1"/>
        <end position="21"/>
    </location>
</feature>
<feature type="chain" id="PRO_0000433465" description="Adhesion G protein-coupled receptor A3" evidence="1">
    <location>
        <begin position="22"/>
        <end position="1346"/>
    </location>
</feature>
<feature type="topological domain" description="Extracellular" evidence="7">
    <location>
        <begin position="22"/>
        <end position="739"/>
    </location>
</feature>
<feature type="transmembrane region" description="Helical; Name=1" evidence="1">
    <location>
        <begin position="740"/>
        <end position="760"/>
    </location>
</feature>
<feature type="topological domain" description="Cytoplasmic" evidence="7">
    <location>
        <begin position="761"/>
        <end position="773"/>
    </location>
</feature>
<feature type="transmembrane region" description="Helical; Name=2" evidence="1">
    <location>
        <begin position="774"/>
        <end position="794"/>
    </location>
</feature>
<feature type="topological domain" description="Extracellular" evidence="7">
    <location>
        <begin position="795"/>
        <end position="804"/>
    </location>
</feature>
<feature type="transmembrane region" description="Helical; Name=3" evidence="1">
    <location>
        <begin position="805"/>
        <end position="825"/>
    </location>
</feature>
<feature type="topological domain" description="Cytoplasmic" evidence="7">
    <location>
        <begin position="826"/>
        <end position="854"/>
    </location>
</feature>
<feature type="transmembrane region" description="Helical; Name=4" evidence="1">
    <location>
        <begin position="855"/>
        <end position="875"/>
    </location>
</feature>
<feature type="topological domain" description="Extracellular" evidence="7">
    <location>
        <begin position="876"/>
        <end position="897"/>
    </location>
</feature>
<feature type="transmembrane region" description="Helical; Name=5" evidence="1">
    <location>
        <begin position="898"/>
        <end position="918"/>
    </location>
</feature>
<feature type="topological domain" description="Cytoplasmic" evidence="7">
    <location>
        <begin position="919"/>
        <end position="977"/>
    </location>
</feature>
<feature type="transmembrane region" description="Helical; Name=6" evidence="1">
    <location>
        <begin position="978"/>
        <end position="998"/>
    </location>
</feature>
<feature type="topological domain" description="Extracellular" evidence="7">
    <location>
        <begin position="999"/>
        <end position="1005"/>
    </location>
</feature>
<feature type="transmembrane region" description="Helical; Name=7" evidence="1">
    <location>
        <begin position="1006"/>
        <end position="1026"/>
    </location>
</feature>
<feature type="topological domain" description="Cytoplasmic" evidence="7">
    <location>
        <begin position="1027"/>
        <end position="1346"/>
    </location>
</feature>
<feature type="repeat" description="LRR 1" evidence="1">
    <location>
        <begin position="66"/>
        <end position="90"/>
    </location>
</feature>
<feature type="repeat" description="LRR 2" evidence="1">
    <location>
        <begin position="91"/>
        <end position="114"/>
    </location>
</feature>
<feature type="repeat" description="LRR 3" evidence="1">
    <location>
        <begin position="116"/>
        <end position="138"/>
    </location>
</feature>
<feature type="repeat" description="LRR 4" evidence="1">
    <location>
        <begin position="139"/>
        <end position="162"/>
    </location>
</feature>
<feature type="domain" description="LRRCT" evidence="1">
    <location>
        <begin position="176"/>
        <end position="223"/>
    </location>
</feature>
<feature type="domain" description="Ig-like" evidence="3">
    <location>
        <begin position="229"/>
        <end position="327"/>
    </location>
</feature>
<feature type="repeat" description="LRR 5" evidence="1">
    <location>
        <begin position="503"/>
        <end position="529"/>
    </location>
</feature>
<feature type="domain" description="GAIN-B" evidence="2">
    <location>
        <begin position="563"/>
        <end position="728"/>
    </location>
</feature>
<feature type="repeat" description="LRR 6" evidence="1">
    <location>
        <begin position="574"/>
        <end position="600"/>
    </location>
</feature>
<feature type="repeat" description="LRR 7" evidence="1">
    <location>
        <begin position="611"/>
        <end position="632"/>
    </location>
</feature>
<feature type="region of interest" description="Disordered" evidence="4">
    <location>
        <begin position="18"/>
        <end position="45"/>
    </location>
</feature>
<feature type="region of interest" description="GPS" evidence="2">
    <location>
        <begin position="679"/>
        <end position="728"/>
    </location>
</feature>
<feature type="region of interest" description="Disordered" evidence="4">
    <location>
        <begin position="1157"/>
        <end position="1188"/>
    </location>
</feature>
<feature type="region of interest" description="Disordered" evidence="4">
    <location>
        <begin position="1202"/>
        <end position="1284"/>
    </location>
</feature>
<feature type="short sequence motif" description="PDZ-binding" evidence="1">
    <location>
        <begin position="1344"/>
        <end position="1346"/>
    </location>
</feature>
<feature type="compositionally biased region" description="Polar residues" evidence="4">
    <location>
        <begin position="1157"/>
        <end position="1169"/>
    </location>
</feature>
<feature type="compositionally biased region" description="Basic residues" evidence="4">
    <location>
        <begin position="1173"/>
        <end position="1187"/>
    </location>
</feature>
<feature type="compositionally biased region" description="Basic residues" evidence="4">
    <location>
        <begin position="1212"/>
        <end position="1226"/>
    </location>
</feature>
<feature type="compositionally biased region" description="Low complexity" evidence="4">
    <location>
        <begin position="1238"/>
        <end position="1252"/>
    </location>
</feature>
<feature type="compositionally biased region" description="Gly residues" evidence="4">
    <location>
        <begin position="1266"/>
        <end position="1280"/>
    </location>
</feature>
<feature type="disulfide bond" evidence="3">
    <location>
        <begin position="251"/>
        <end position="311"/>
    </location>
</feature>
<feature type="disulfide bond" evidence="2">
    <location>
        <begin position="698"/>
        <end position="712"/>
    </location>
</feature>
<protein>
    <recommendedName>
        <fullName>Adhesion G protein-coupled receptor A3</fullName>
    </recommendedName>
    <alternativeName>
        <fullName>G-protein coupled receptor 125</fullName>
    </alternativeName>
</protein>
<sequence length="1346" mass="148655">MSVLCVLLLAFVLPLRGSSSAGSTECKTYDERSRSAGKSSPSGATLDRKVVCSNMEFRQVPSPDTFPNRTVSLILSNNKIQELLNGSFVGLSSLERLDIKNNIITHIEPGAFYGLFSLKRLDLSKNLIGCLHVDVFKGLTNLVKLNLSENKFSSLSQGIFDSLGSLKILEFDSPYLLCDCNLQWLVVWIKEKAIGVKETRCSFPRSLQGQLITTLRAETLTCDAPLELPSFQMTPSQHQIVFQGDSLPFQCMASFVDEDMQVLWYQDGKMVEPDATQGIYIEKSMVQNCSLIASALTISNIQPGFTGNWECRVRTSRGNNTRTVHIVVLESSAKYCLPDRVSNNKGEYRWPRTLAGITAYLPCKRQVTGAGIYSGSSAEDRRAWRRCDRGGQWAEDDYSRCEYMKDVTRVLYIINQMPLNLTNVVQTAQQLLAYTAEAPNFSDKVDVIFVAEMIEKIGKFAEKYKELGDVMVDISSNLLLADERVLWMAQREARACSRMVESLQRIALLRVSNGALAYSTNSPNIALEAHAIKASSFNGMTCTLFQKLSPERTVMAHHGEISPERQLSFKCNVTSNLSALALKNTIVEASLQLPPTLFSSLGSSGQAEEAVYKLHLLAFRNGKLFPPTGNSSILSDGSKRRSVVTPVMITKIEGFPLRDLLSPVNVTLRRFLQGSDAVPAFWNFSLQGGQGGWQSDGCRILHQDDNFTTVSCHSLNSYAVLMDLNRTGYNVFIFRPLHPVIYSTALVLVLCLLSVIVSYIYHHKSVRISKKCWHMLVNLCLHILLTCAVFVGGINQTYNASVCQAMGIVLHYSTLATALWSGVTARNIYKQVTRKAKRYEELDEPPPPPRPMLRFYLIGGGIPIIVCGITAAANIKNYGSQVNAPYCWMAWEPSLGAFYGPAAFIVFVDCMYFLSILIQLRRHPERRFELKEQSEEQQHLSVTEATEITPVHLESSPTAQPVPMSALENEHTFVSQLMGVAGSLTLYAALWVFGALAISQEHPADLVFACLFGALALGLGAFLVAHHCVNRQDMRRHWSQACCLIRRNYAVQVDSLLLPIAGSSGSVMTSRGNGEATKCPASSAESSCTNKSAPSLRNSTQGCKLTNLQVEAAQCKVVAPSTANGTAVLDNSLTEHSVDNEIKMHVAPIEIQYRPSSVNNNNLPGNANITGHPGRHHKNRSRAHRASRLTVLREYSYDVPTSVEGSVQSVPNKRHHHESLHARNSRRAAYLAYRERQQSQLQQDSSDAASTSVPRRSRHFSKGTRIGNGFGHGISNGGLLDGSEADVTNQTKECPKQTLTVELEVQPKSYGLNLACQNGSAKDSERLNVESSGNVKTGLWKHETTV</sequence>